<organism>
    <name type="scientific">Xenopus laevis</name>
    <name type="common">African clawed frog</name>
    <dbReference type="NCBI Taxonomy" id="8355"/>
    <lineage>
        <taxon>Eukaryota</taxon>
        <taxon>Metazoa</taxon>
        <taxon>Chordata</taxon>
        <taxon>Craniata</taxon>
        <taxon>Vertebrata</taxon>
        <taxon>Euteleostomi</taxon>
        <taxon>Amphibia</taxon>
        <taxon>Batrachia</taxon>
        <taxon>Anura</taxon>
        <taxon>Pipoidea</taxon>
        <taxon>Pipidae</taxon>
        <taxon>Xenopodinae</taxon>
        <taxon>Xenopus</taxon>
        <taxon>Xenopus</taxon>
    </lineage>
</organism>
<reference key="1">
    <citation type="journal article" date="1989" name="Mol. Endocrinol.">
        <title>Xenopus laevis serum albumin: sequence of the complementary deoxyribonucleic acids encoding the 68- and 74-kilodalton peptides and the regulation of albumin gene expression by thyroid hormone during development.</title>
        <authorList>
            <person name="Moskaitis J.E."/>
            <person name="Sargent T.D."/>
            <person name="Smith L.H. Jr."/>
            <person name="Pastori R.L."/>
            <person name="Schoenberg D.R."/>
        </authorList>
    </citation>
    <scope>NUCLEOTIDE SEQUENCE [MRNA]</scope>
</reference>
<reference key="2">
    <citation type="journal article" date="1988" name="J. Mol. Biol.">
        <title>5'-flanking and 5'-proximal exon regions of the two Xenopus albumin genes. Deletion analysis of constitutive promoter function.</title>
        <authorList>
            <person name="Schorpp M."/>
            <person name="Doebbeling U."/>
            <person name="Wagner U."/>
            <person name="Ryffel G.U."/>
        </authorList>
    </citation>
    <scope>NUCLEOTIDE SEQUENCE [MRNA] OF 1-48</scope>
</reference>
<reference key="3">
    <citation type="journal article" date="1985" name="Eur. J. Biochem.">
        <title>Deinduction of transcription of Xenopus 74-kDa albumin genes and destabilization of mRNA by estrogen in vivo and in hepatocyte cultures.</title>
        <authorList>
            <person name="Wolffe A.P."/>
            <person name="Glover J.F."/>
            <person name="Martin S.C."/>
            <person name="Tenniswood M.P.R."/>
            <person name="Williams J.L."/>
            <person name="Tata J.R."/>
        </authorList>
    </citation>
    <scope>NUCLEOTIDE SEQUENCE [MRNA] OF 458-556</scope>
    <source>
        <tissue>Liver</tissue>
    </source>
</reference>
<sequence>MKWITLICLLISSTLIESRIIFKRDTDVDHHKHIADMYNLLTERTFKGLTLAIVSQNLQKCSLEELSKLVNEINDFAKSCTGNDKTPECEKPIGTLFYDKLCADPKVGVNYEWSKECCSKQDPERAQCFRAHRVFEHNPVRPKPEETCALFKEHPDDLLSAFIHEEARNHPDLYPPAVLLLTQQYGKLVEHCCEEEDKDKCFAEKMKELMKHSHSIEDKQKHFCWIVNNYPERVIKALNLARVSHRYPKPDFKLAHKFTEETTHFIKDCCHGDMFECMTERLELSEHTCQHKDELSTKLEKCCNLPLLERTYCIVTLENDDVPAELSKPITEFTEDPHVCEKYAENKSFLEISPWQSQETPELSEQFLLQSAKEYESLLNKCCFSDNPPECYKDGADRFMNEAKERFAYLKQNCDILHEHGEYLFENELLIRYTKKMPQVSDETLIGIAHQMADIGEHCCAVPENQRMPCAEGDLTILIGKMCERQKKTFINNHVAHCCTDSYSGMRSCFTALGPDEDYVPPPVTDDTFHFDDKICTANDKEKQHIKQKFLVKLIKVSPKLEKNHIDEWLLEFLKMVQKCCTADEHQPCFDTEKPVLIEHCQKLHP</sequence>
<dbReference type="EMBL" id="M18350">
    <property type="protein sequence ID" value="AAA49636.1"/>
    <property type="molecule type" value="mRNA"/>
</dbReference>
<dbReference type="PIR" id="A41682">
    <property type="entry name" value="ABXL68"/>
</dbReference>
<dbReference type="RefSeq" id="NP_001081244.1">
    <property type="nucleotide sequence ID" value="NM_001087775.1"/>
</dbReference>
<dbReference type="SMR" id="P08759"/>
<dbReference type="IntAct" id="P08759">
    <property type="interactions" value="1"/>
</dbReference>
<dbReference type="GeneID" id="397731"/>
<dbReference type="CTD" id="397731"/>
<dbReference type="Proteomes" id="UP000186698">
    <property type="component" value="Unplaced"/>
</dbReference>
<dbReference type="GO" id="GO:0072562">
    <property type="term" value="C:blood microparticle"/>
    <property type="evidence" value="ECO:0007669"/>
    <property type="project" value="TreeGrafter"/>
</dbReference>
<dbReference type="GO" id="GO:0005737">
    <property type="term" value="C:cytoplasm"/>
    <property type="evidence" value="ECO:0000318"/>
    <property type="project" value="GO_Central"/>
</dbReference>
<dbReference type="GO" id="GO:0008289">
    <property type="term" value="F:lipid binding"/>
    <property type="evidence" value="ECO:0007669"/>
    <property type="project" value="UniProtKB-KW"/>
</dbReference>
<dbReference type="GO" id="GO:0046872">
    <property type="term" value="F:metal ion binding"/>
    <property type="evidence" value="ECO:0007669"/>
    <property type="project" value="UniProtKB-KW"/>
</dbReference>
<dbReference type="CDD" id="cd00015">
    <property type="entry name" value="ALBUMIN"/>
    <property type="match status" value="3"/>
</dbReference>
<dbReference type="FunFam" id="1.10.246.10:FF:000001">
    <property type="entry name" value="Serum albumin"/>
    <property type="match status" value="1"/>
</dbReference>
<dbReference type="Gene3D" id="1.10.246.10">
    <property type="match status" value="6"/>
</dbReference>
<dbReference type="InterPro" id="IPR000264">
    <property type="entry name" value="ALB/AFP/VDB"/>
</dbReference>
<dbReference type="InterPro" id="IPR020858">
    <property type="entry name" value="Serum_albumin-like"/>
</dbReference>
<dbReference type="InterPro" id="IPR021177">
    <property type="entry name" value="Serum_albumin/AFP/Afamin"/>
</dbReference>
<dbReference type="InterPro" id="IPR020857">
    <property type="entry name" value="Serum_albumin_CS"/>
</dbReference>
<dbReference type="InterPro" id="IPR014760">
    <property type="entry name" value="Serum_albumin_N"/>
</dbReference>
<dbReference type="PANTHER" id="PTHR11385:SF14">
    <property type="entry name" value="AFAMIN"/>
    <property type="match status" value="1"/>
</dbReference>
<dbReference type="PANTHER" id="PTHR11385">
    <property type="entry name" value="SERUM ALBUMIN-RELATED"/>
    <property type="match status" value="1"/>
</dbReference>
<dbReference type="Pfam" id="PF00273">
    <property type="entry name" value="Serum_albumin"/>
    <property type="match status" value="3"/>
</dbReference>
<dbReference type="PIRSF" id="PIRSF002520">
    <property type="entry name" value="Serum_albumin_subgroup"/>
    <property type="match status" value="1"/>
</dbReference>
<dbReference type="PRINTS" id="PR00802">
    <property type="entry name" value="SERUMALBUMIN"/>
</dbReference>
<dbReference type="SMART" id="SM00103">
    <property type="entry name" value="ALBUMIN"/>
    <property type="match status" value="3"/>
</dbReference>
<dbReference type="SUPFAM" id="SSF48552">
    <property type="entry name" value="Serum albumin-like"/>
    <property type="match status" value="3"/>
</dbReference>
<dbReference type="PROSITE" id="PS00212">
    <property type="entry name" value="ALBUMIN_1"/>
    <property type="match status" value="3"/>
</dbReference>
<dbReference type="PROSITE" id="PS51438">
    <property type="entry name" value="ALBUMIN_2"/>
    <property type="match status" value="3"/>
</dbReference>
<proteinExistence type="evidence at transcript level"/>
<comment type="function">
    <text>Binds water, Ca(2+), Na(+), K(+), fatty acids, hormones, bilirubin and drugs. Its main function is the regulation of the colloidal osmotic pressure of blood.</text>
</comment>
<comment type="subcellular location">
    <subcellularLocation>
        <location>Secreted</location>
    </subcellularLocation>
</comment>
<comment type="tissue specificity">
    <text>Plasma.</text>
</comment>
<comment type="similarity">
    <text evidence="3">Belongs to the ALB/AFP/VDB family.</text>
</comment>
<evidence type="ECO:0000250" key="1"/>
<evidence type="ECO:0000255" key="2"/>
<evidence type="ECO:0000255" key="3">
    <source>
        <dbReference type="PROSITE-ProRule" id="PRU00769"/>
    </source>
</evidence>
<feature type="signal peptide" evidence="2">
    <location>
        <begin position="1"/>
        <end position="18"/>
    </location>
</feature>
<feature type="propeptide" id="PRO_0000001089" evidence="2">
    <location>
        <begin position="19"/>
        <end position="24"/>
    </location>
</feature>
<feature type="chain" id="PRO_0000001090" description="Albumin A">
    <location>
        <begin position="25"/>
        <end position="606"/>
    </location>
</feature>
<feature type="domain" description="Albumin 1" evidence="3">
    <location>
        <begin position="22"/>
        <end position="211"/>
    </location>
</feature>
<feature type="domain" description="Albumin 2" evidence="3">
    <location>
        <begin position="212"/>
        <end position="401"/>
    </location>
</feature>
<feature type="domain" description="Albumin 3" evidence="3">
    <location>
        <begin position="402"/>
        <end position="599"/>
    </location>
</feature>
<feature type="binding site" evidence="1">
    <location>
        <position position="30"/>
    </location>
    <ligand>
        <name>Cu cation</name>
        <dbReference type="ChEBI" id="CHEBI:23378"/>
    </ligand>
</feature>
<feature type="disulfide bond" evidence="3">
    <location>
        <begin position="80"/>
        <end position="89"/>
    </location>
</feature>
<feature type="disulfide bond" evidence="3">
    <location>
        <begin position="102"/>
        <end position="118"/>
    </location>
</feature>
<feature type="disulfide bond" evidence="3">
    <location>
        <begin position="117"/>
        <end position="128"/>
    </location>
</feature>
<feature type="disulfide bond" evidence="3">
    <location>
        <begin position="148"/>
        <end position="193"/>
    </location>
</feature>
<feature type="disulfide bond" evidence="3">
    <location>
        <begin position="192"/>
        <end position="201"/>
    </location>
</feature>
<feature type="disulfide bond" evidence="3">
    <location>
        <begin position="224"/>
        <end position="270"/>
    </location>
</feature>
<feature type="disulfide bond" evidence="3">
    <location>
        <begin position="269"/>
        <end position="277"/>
    </location>
</feature>
<feature type="disulfide bond" evidence="3">
    <location>
        <begin position="289"/>
        <end position="303"/>
    </location>
</feature>
<feature type="disulfide bond" evidence="3">
    <location>
        <begin position="302"/>
        <end position="313"/>
    </location>
</feature>
<feature type="disulfide bond" evidence="3">
    <location>
        <begin position="340"/>
        <end position="383"/>
    </location>
</feature>
<feature type="disulfide bond" evidence="3">
    <location>
        <begin position="382"/>
        <end position="391"/>
    </location>
</feature>
<feature type="disulfide bond" evidence="3">
    <location>
        <begin position="414"/>
        <end position="460"/>
    </location>
</feature>
<feature type="disulfide bond" evidence="3">
    <location>
        <begin position="459"/>
        <end position="470"/>
    </location>
</feature>
<feature type="disulfide bond" evidence="3">
    <location>
        <begin position="483"/>
        <end position="499"/>
    </location>
</feature>
<feature type="disulfide bond" evidence="3">
    <location>
        <begin position="498"/>
        <end position="509"/>
    </location>
</feature>
<feature type="disulfide bond" evidence="3">
    <location>
        <begin position="536"/>
        <end position="581"/>
    </location>
</feature>
<feature type="disulfide bond" evidence="3">
    <location>
        <begin position="580"/>
        <end position="589"/>
    </location>
</feature>
<name>ALBUA_XENLA</name>
<keyword id="KW-0165">Cleavage on pair of basic residues</keyword>
<keyword id="KW-0186">Copper</keyword>
<keyword id="KW-1015">Disulfide bond</keyword>
<keyword id="KW-0446">Lipid-binding</keyword>
<keyword id="KW-0479">Metal-binding</keyword>
<keyword id="KW-1185">Reference proteome</keyword>
<keyword id="KW-0677">Repeat</keyword>
<keyword id="KW-0964">Secreted</keyword>
<keyword id="KW-0732">Signal</keyword>
<gene>
    <name type="primary">alb-a</name>
</gene>
<protein>
    <recommendedName>
        <fullName>Albumin A</fullName>
    </recommendedName>
    <alternativeName>
        <fullName>68 kDa serum albumin</fullName>
    </alternativeName>
</protein>
<accession>P08759</accession>